<feature type="peptide" id="PRO_0000343187" description="Bradykinin-potentiating peptide 5">
    <location>
        <begin position="1"/>
        <end position="11"/>
    </location>
</feature>
<dbReference type="GO" id="GO:0005576">
    <property type="term" value="C:extracellular region"/>
    <property type="evidence" value="ECO:0007669"/>
    <property type="project" value="UniProtKB-SubCell"/>
</dbReference>
<dbReference type="GO" id="GO:0030414">
    <property type="term" value="F:peptidase inhibitor activity"/>
    <property type="evidence" value="ECO:0007669"/>
    <property type="project" value="UniProtKB-KW"/>
</dbReference>
<dbReference type="GO" id="GO:0008217">
    <property type="term" value="P:regulation of blood pressure"/>
    <property type="evidence" value="ECO:0007669"/>
    <property type="project" value="UniProtKB-KW"/>
</dbReference>
<evidence type="ECO:0000269" key="1">
    <source>
    </source>
</evidence>
<evidence type="ECO:0000305" key="2"/>
<sequence>EEGGSPPPVVI</sequence>
<organism>
    <name type="scientific">Bothrops neuwiedi</name>
    <name type="common">Neuwied's lancehead</name>
    <dbReference type="NCBI Taxonomy" id="95648"/>
    <lineage>
        <taxon>Eukaryota</taxon>
        <taxon>Metazoa</taxon>
        <taxon>Chordata</taxon>
        <taxon>Craniata</taxon>
        <taxon>Vertebrata</taxon>
        <taxon>Euteleostomi</taxon>
        <taxon>Lepidosauria</taxon>
        <taxon>Squamata</taxon>
        <taxon>Bifurcata</taxon>
        <taxon>Unidentata</taxon>
        <taxon>Episquamata</taxon>
        <taxon>Toxicofera</taxon>
        <taxon>Serpentes</taxon>
        <taxon>Colubroidea</taxon>
        <taxon>Viperidae</taxon>
        <taxon>Crotalinae</taxon>
        <taxon>Bothrops</taxon>
    </lineage>
</organism>
<reference key="1">
    <citation type="journal article" date="1998" name="J. Protein Chem.">
        <title>Isolation: analysis and properties of three bradykinin-potentiating peptides (BPP-II, BPP-III, and BPP-V) from Bothrops neuwiedi venom.</title>
        <authorList>
            <person name="Ferreira L.A.F."/>
            <person name="Galle A."/>
            <person name="Raida M."/>
            <person name="Schrader M."/>
            <person name="Lebrun I."/>
            <person name="Habermehl G."/>
        </authorList>
    </citation>
    <scope>PROTEIN SEQUENCE</scope>
    <scope>MASS SPECTROMETRY</scope>
    <source>
        <tissue>Venom</tissue>
    </source>
</reference>
<accession>P0C7S3</accession>
<protein>
    <recommendedName>
        <fullName>Bradykinin-potentiating peptide 5</fullName>
        <shortName>BPP-5</shortName>
    </recommendedName>
    <alternativeName>
        <fullName>BPP-V</fullName>
    </alternativeName>
</protein>
<proteinExistence type="evidence at protein level"/>
<name>BPP5_BOTNU</name>
<keyword id="KW-0903">Direct protein sequencing</keyword>
<keyword id="KW-0382">Hypotensive agent</keyword>
<keyword id="KW-0481">Metalloenzyme inhibitor</keyword>
<keyword id="KW-0483">Metalloprotease inhibitor</keyword>
<keyword id="KW-0646">Protease inhibitor</keyword>
<keyword id="KW-0964">Secreted</keyword>
<comment type="function">
    <text>This peptide both inhibits the activity of the angiotensin-converting enzyme (ACE) and enhances the action of bradykinin by inhibiting the peptidases that inactivate it. It acts as an indirect hypotensive agent.</text>
</comment>
<comment type="subcellular location">
    <subcellularLocation>
        <location>Secreted</location>
    </subcellularLocation>
</comment>
<comment type="tissue specificity">
    <text>Expressed by the venom gland.</text>
</comment>
<comment type="mass spectrometry"/>
<comment type="similarity">
    <text evidence="2">Belongs to the bradykinin-potentiating peptide family.</text>
</comment>